<name>THIM_CAMLR</name>
<protein>
    <recommendedName>
        <fullName evidence="1">Hydroxyethylthiazole kinase</fullName>
        <ecNumber evidence="1">2.7.1.50</ecNumber>
    </recommendedName>
    <alternativeName>
        <fullName evidence="1">4-methyl-5-beta-hydroxyethylthiazole kinase</fullName>
        <shortName evidence="1">TH kinase</shortName>
        <shortName evidence="1">Thz kinase</shortName>
    </alternativeName>
</protein>
<keyword id="KW-0067">ATP-binding</keyword>
<keyword id="KW-0418">Kinase</keyword>
<keyword id="KW-0460">Magnesium</keyword>
<keyword id="KW-0479">Metal-binding</keyword>
<keyword id="KW-0547">Nucleotide-binding</keyword>
<keyword id="KW-1185">Reference proteome</keyword>
<keyword id="KW-0784">Thiamine biosynthesis</keyword>
<keyword id="KW-0808">Transferase</keyword>
<reference key="1">
    <citation type="journal article" date="2008" name="Foodborne Pathog. Dis.">
        <title>The complete genome sequence and analysis of the human pathogen Campylobacter lari.</title>
        <authorList>
            <person name="Miller W.G."/>
            <person name="Wang G."/>
            <person name="Binnewies T.T."/>
            <person name="Parker C.T."/>
        </authorList>
    </citation>
    <scope>NUCLEOTIDE SEQUENCE [LARGE SCALE GENOMIC DNA]</scope>
    <source>
        <strain>RM2100 / D67 / ATCC BAA-1060</strain>
    </source>
</reference>
<evidence type="ECO:0000255" key="1">
    <source>
        <dbReference type="HAMAP-Rule" id="MF_00228"/>
    </source>
</evidence>
<proteinExistence type="inferred from homology"/>
<sequence length="260" mass="28257">MYIEKIRKVKPLIHHITNYVTVNDCANASIAIGASPIMADFIQEQEEFSKICNCLVLNTGTINERVANSMYESAKFYGNLNKAIVLDPVALGVSMARDAINLKLLNSYKISIIKANASEIASVIGLDGKAKGTDNTFVVNDHFLDKACEYAKGHNRILVVSGEVDFIISSEKIAKIYNGSIMATKITGAGCMCASMCGVFAGVIEDKFQASLQAMLSFDIACEMAEEISNGSGSFRVNLIDALSNLNDEDVKKRAKYEII</sequence>
<accession>B9KD06</accession>
<organism>
    <name type="scientific">Campylobacter lari (strain RM2100 / D67 / ATCC BAA-1060)</name>
    <dbReference type="NCBI Taxonomy" id="306263"/>
    <lineage>
        <taxon>Bacteria</taxon>
        <taxon>Pseudomonadati</taxon>
        <taxon>Campylobacterota</taxon>
        <taxon>Epsilonproteobacteria</taxon>
        <taxon>Campylobacterales</taxon>
        <taxon>Campylobacteraceae</taxon>
        <taxon>Campylobacter</taxon>
    </lineage>
</organism>
<gene>
    <name evidence="1" type="primary">thiM</name>
    <name type="ordered locus">Cla_1123</name>
</gene>
<comment type="function">
    <text evidence="1">Catalyzes the phosphorylation of the hydroxyl group of 4-methyl-5-beta-hydroxyethylthiazole (THZ).</text>
</comment>
<comment type="catalytic activity">
    <reaction evidence="1">
        <text>5-(2-hydroxyethyl)-4-methylthiazole + ATP = 4-methyl-5-(2-phosphooxyethyl)-thiazole + ADP + H(+)</text>
        <dbReference type="Rhea" id="RHEA:24212"/>
        <dbReference type="ChEBI" id="CHEBI:15378"/>
        <dbReference type="ChEBI" id="CHEBI:17957"/>
        <dbReference type="ChEBI" id="CHEBI:30616"/>
        <dbReference type="ChEBI" id="CHEBI:58296"/>
        <dbReference type="ChEBI" id="CHEBI:456216"/>
        <dbReference type="EC" id="2.7.1.50"/>
    </reaction>
</comment>
<comment type="cofactor">
    <cofactor evidence="1">
        <name>Mg(2+)</name>
        <dbReference type="ChEBI" id="CHEBI:18420"/>
    </cofactor>
</comment>
<comment type="pathway">
    <text evidence="1">Cofactor biosynthesis; thiamine diphosphate biosynthesis; 4-methyl-5-(2-phosphoethyl)-thiazole from 5-(2-hydroxyethyl)-4-methylthiazole: step 1/1.</text>
</comment>
<comment type="similarity">
    <text evidence="1">Belongs to the Thz kinase family.</text>
</comment>
<dbReference type="EC" id="2.7.1.50" evidence="1"/>
<dbReference type="EMBL" id="CP000932">
    <property type="protein sequence ID" value="ACM64445.1"/>
    <property type="molecule type" value="Genomic_DNA"/>
</dbReference>
<dbReference type="RefSeq" id="WP_012661828.1">
    <property type="nucleotide sequence ID" value="NC_012039.1"/>
</dbReference>
<dbReference type="SMR" id="B9KD06"/>
<dbReference type="STRING" id="306263.Cla_1123"/>
<dbReference type="KEGG" id="cla:CLA_1123"/>
<dbReference type="PATRIC" id="fig|306263.5.peg.1108"/>
<dbReference type="eggNOG" id="COG2145">
    <property type="taxonomic scope" value="Bacteria"/>
</dbReference>
<dbReference type="HOGENOM" id="CLU_019943_0_0_7"/>
<dbReference type="UniPathway" id="UPA00060">
    <property type="reaction ID" value="UER00139"/>
</dbReference>
<dbReference type="Proteomes" id="UP000007727">
    <property type="component" value="Chromosome"/>
</dbReference>
<dbReference type="GO" id="GO:0005524">
    <property type="term" value="F:ATP binding"/>
    <property type="evidence" value="ECO:0007669"/>
    <property type="project" value="UniProtKB-UniRule"/>
</dbReference>
<dbReference type="GO" id="GO:0004417">
    <property type="term" value="F:hydroxyethylthiazole kinase activity"/>
    <property type="evidence" value="ECO:0007669"/>
    <property type="project" value="UniProtKB-UniRule"/>
</dbReference>
<dbReference type="GO" id="GO:0000287">
    <property type="term" value="F:magnesium ion binding"/>
    <property type="evidence" value="ECO:0007669"/>
    <property type="project" value="UniProtKB-UniRule"/>
</dbReference>
<dbReference type="GO" id="GO:0009228">
    <property type="term" value="P:thiamine biosynthetic process"/>
    <property type="evidence" value="ECO:0007669"/>
    <property type="project" value="UniProtKB-KW"/>
</dbReference>
<dbReference type="GO" id="GO:0009229">
    <property type="term" value="P:thiamine diphosphate biosynthetic process"/>
    <property type="evidence" value="ECO:0007669"/>
    <property type="project" value="UniProtKB-UniRule"/>
</dbReference>
<dbReference type="CDD" id="cd01170">
    <property type="entry name" value="THZ_kinase"/>
    <property type="match status" value="1"/>
</dbReference>
<dbReference type="Gene3D" id="3.40.1190.20">
    <property type="match status" value="1"/>
</dbReference>
<dbReference type="HAMAP" id="MF_00228">
    <property type="entry name" value="Thz_kinase"/>
    <property type="match status" value="1"/>
</dbReference>
<dbReference type="InterPro" id="IPR000417">
    <property type="entry name" value="Hyethyz_kinase"/>
</dbReference>
<dbReference type="InterPro" id="IPR029056">
    <property type="entry name" value="Ribokinase-like"/>
</dbReference>
<dbReference type="NCBIfam" id="NF006830">
    <property type="entry name" value="PRK09355.1"/>
    <property type="match status" value="1"/>
</dbReference>
<dbReference type="Pfam" id="PF02110">
    <property type="entry name" value="HK"/>
    <property type="match status" value="1"/>
</dbReference>
<dbReference type="PIRSF" id="PIRSF000513">
    <property type="entry name" value="Thz_kinase"/>
    <property type="match status" value="1"/>
</dbReference>
<dbReference type="PRINTS" id="PR01099">
    <property type="entry name" value="HYETHTZKNASE"/>
</dbReference>
<dbReference type="SUPFAM" id="SSF53613">
    <property type="entry name" value="Ribokinase-like"/>
    <property type="match status" value="1"/>
</dbReference>
<feature type="chain" id="PRO_0000383831" description="Hydroxyethylthiazole kinase">
    <location>
        <begin position="1"/>
        <end position="260"/>
    </location>
</feature>
<feature type="binding site" evidence="1">
    <location>
        <position position="38"/>
    </location>
    <ligand>
        <name>substrate</name>
    </ligand>
</feature>
<feature type="binding site" evidence="1">
    <location>
        <position position="114"/>
    </location>
    <ligand>
        <name>ATP</name>
        <dbReference type="ChEBI" id="CHEBI:30616"/>
    </ligand>
</feature>
<feature type="binding site" evidence="1">
    <location>
        <position position="161"/>
    </location>
    <ligand>
        <name>ATP</name>
        <dbReference type="ChEBI" id="CHEBI:30616"/>
    </ligand>
</feature>
<feature type="binding site" evidence="1">
    <location>
        <position position="188"/>
    </location>
    <ligand>
        <name>substrate</name>
    </ligand>
</feature>